<protein>
    <recommendedName>
        <fullName evidence="1">Cytochrome c biogenesis protein CcsA</fullName>
    </recommendedName>
</protein>
<name>CCSA_PORPU</name>
<gene>
    <name evidence="1" type="primary">ccsA</name>
</gene>
<evidence type="ECO:0000255" key="1">
    <source>
        <dbReference type="HAMAP-Rule" id="MF_01391"/>
    </source>
</evidence>
<proteinExistence type="inferred from homology"/>
<reference key="1">
    <citation type="journal article" date="1995" name="Plant Mol. Biol. Rep.">
        <title>Complete nucleotide sequence of the Porphyra purpurea chloroplast genome.</title>
        <authorList>
            <person name="Reith M.E."/>
            <person name="Munholland J."/>
        </authorList>
    </citation>
    <scope>NUCLEOTIDE SEQUENCE [LARGE SCALE GENOMIC DNA]</scope>
    <source>
        <strain>Avonport</strain>
    </source>
</reference>
<feature type="chain" id="PRO_0000201616" description="Cytochrome c biogenesis protein CcsA">
    <location>
        <begin position="1"/>
        <end position="319"/>
    </location>
</feature>
<feature type="transmembrane region" description="Helical" evidence="1">
    <location>
        <begin position="11"/>
        <end position="31"/>
    </location>
</feature>
<feature type="transmembrane region" description="Helical" evidence="1">
    <location>
        <begin position="34"/>
        <end position="54"/>
    </location>
</feature>
<feature type="transmembrane region" description="Helical" evidence="1">
    <location>
        <begin position="71"/>
        <end position="91"/>
    </location>
</feature>
<feature type="transmembrane region" description="Helical" evidence="1">
    <location>
        <begin position="97"/>
        <end position="117"/>
    </location>
</feature>
<feature type="transmembrane region" description="Helical" evidence="1">
    <location>
        <begin position="142"/>
        <end position="162"/>
    </location>
</feature>
<feature type="transmembrane region" description="Helical" evidence="1">
    <location>
        <begin position="227"/>
        <end position="247"/>
    </location>
</feature>
<feature type="transmembrane region" description="Helical" evidence="1">
    <location>
        <begin position="254"/>
        <end position="274"/>
    </location>
</feature>
<feature type="transmembrane region" description="Helical" evidence="1">
    <location>
        <begin position="288"/>
        <end position="308"/>
    </location>
</feature>
<comment type="function">
    <text evidence="1">Required during biogenesis of c-type cytochromes (cytochrome c6 and cytochrome f) at the step of heme attachment.</text>
</comment>
<comment type="subunit">
    <text evidence="1">May interact with Ccs1.</text>
</comment>
<comment type="subcellular location">
    <subcellularLocation>
        <location evidence="1">Plastid</location>
        <location evidence="1">Chloroplast thylakoid membrane</location>
        <topology evidence="1">Multi-pass membrane protein</topology>
    </subcellularLocation>
</comment>
<comment type="similarity">
    <text evidence="1">Belongs to the CcmF/CycK/Ccl1/NrfE/CcsA family.</text>
</comment>
<accession>P51369</accession>
<keyword id="KW-0150">Chloroplast</keyword>
<keyword id="KW-0201">Cytochrome c-type biogenesis</keyword>
<keyword id="KW-0472">Membrane</keyword>
<keyword id="KW-0934">Plastid</keyword>
<keyword id="KW-0793">Thylakoid</keyword>
<keyword id="KW-0812">Transmembrane</keyword>
<keyword id="KW-1133">Transmembrane helix</keyword>
<organism>
    <name type="scientific">Porphyra purpurea</name>
    <name type="common">Red seaweed</name>
    <name type="synonym">Ulva purpurea</name>
    <dbReference type="NCBI Taxonomy" id="2787"/>
    <lineage>
        <taxon>Eukaryota</taxon>
        <taxon>Rhodophyta</taxon>
        <taxon>Bangiophyceae</taxon>
        <taxon>Bangiales</taxon>
        <taxon>Bangiaceae</taxon>
        <taxon>Porphyra</taxon>
    </lineage>
</organism>
<dbReference type="EMBL" id="U38804">
    <property type="protein sequence ID" value="AAC08255.1"/>
    <property type="molecule type" value="Genomic_DNA"/>
</dbReference>
<dbReference type="PIR" id="S73290">
    <property type="entry name" value="S73290"/>
</dbReference>
<dbReference type="RefSeq" id="NP_053979.1">
    <property type="nucleotide sequence ID" value="NC_000925.1"/>
</dbReference>
<dbReference type="SMR" id="P51369"/>
<dbReference type="GeneID" id="810009"/>
<dbReference type="GO" id="GO:0009535">
    <property type="term" value="C:chloroplast thylakoid membrane"/>
    <property type="evidence" value="ECO:0007669"/>
    <property type="project" value="UniProtKB-SubCell"/>
</dbReference>
<dbReference type="GO" id="GO:0005886">
    <property type="term" value="C:plasma membrane"/>
    <property type="evidence" value="ECO:0007669"/>
    <property type="project" value="TreeGrafter"/>
</dbReference>
<dbReference type="GO" id="GO:0020037">
    <property type="term" value="F:heme binding"/>
    <property type="evidence" value="ECO:0007669"/>
    <property type="project" value="InterPro"/>
</dbReference>
<dbReference type="GO" id="GO:0017004">
    <property type="term" value="P:cytochrome complex assembly"/>
    <property type="evidence" value="ECO:0007669"/>
    <property type="project" value="UniProtKB-UniRule"/>
</dbReference>
<dbReference type="HAMAP" id="MF_01391">
    <property type="entry name" value="CytC_CcsA"/>
    <property type="match status" value="1"/>
</dbReference>
<dbReference type="InterPro" id="IPR002541">
    <property type="entry name" value="Cyt_c_assembly"/>
</dbReference>
<dbReference type="InterPro" id="IPR017562">
    <property type="entry name" value="Cyt_c_biogenesis_CcsA"/>
</dbReference>
<dbReference type="InterPro" id="IPR045062">
    <property type="entry name" value="Cyt_c_biogenesis_CcsA/CcmC"/>
</dbReference>
<dbReference type="NCBIfam" id="TIGR03144">
    <property type="entry name" value="cytochr_II_ccsB"/>
    <property type="match status" value="1"/>
</dbReference>
<dbReference type="PANTHER" id="PTHR30071:SF1">
    <property type="entry name" value="CYTOCHROME B_B6 PROTEIN-RELATED"/>
    <property type="match status" value="1"/>
</dbReference>
<dbReference type="PANTHER" id="PTHR30071">
    <property type="entry name" value="HEME EXPORTER PROTEIN C"/>
    <property type="match status" value="1"/>
</dbReference>
<dbReference type="Pfam" id="PF01578">
    <property type="entry name" value="Cytochrom_C_asm"/>
    <property type="match status" value="1"/>
</dbReference>
<sequence length="319" mass="35214">MNLEMMQNSCVNFAFGGLLTAMLVYWSSLAFPRISGLNKLAALITLLVNIALALTLSSRWFANGYFPLSNLYESLLFLAWGLTFVHLFIESKTKSRLIGAVSIPVAMFVTAFASLALPIEMQKASPLVPALKSNWLMMHVSIMMISYSILILGSLLSILFLIITRGQDINLKGSSVGTGSYTVKSLDSNPSFAFSNPSGIVQEQSNMLINSTRMNLLESIDNLSYRIIGLGFPLLTIGIVAGAVWANEAWGSYWSWDPKETWALITWLIFAAYLHCRITKSWQGKRPAILASVGFLVVWICYLGVNFLGKGLHSYGWLA</sequence>
<geneLocation type="chloroplast"/>